<evidence type="ECO:0000255" key="1">
    <source>
        <dbReference type="HAMAP-Rule" id="MF_00532"/>
    </source>
</evidence>
<evidence type="ECO:0000305" key="2"/>
<keyword id="KW-1185">Reference proteome</keyword>
<keyword id="KW-0687">Ribonucleoprotein</keyword>
<keyword id="KW-0689">Ribosomal protein</keyword>
<sequence>MAQAQYAGTGRRKNAVARVRLVPGTGKITVNKKDVEEYIPHADLRLVINQPFAVTSTEGSYDVFVNVVGGGYAGQSGAIRHGIARALLEVDPDFRDALKRAGLLTRDARMVERKKPGLKKARKASQFSKR</sequence>
<organism>
    <name type="scientific">Streptococcus mutans serotype c (strain ATCC 700610 / UA159)</name>
    <dbReference type="NCBI Taxonomy" id="210007"/>
    <lineage>
        <taxon>Bacteria</taxon>
        <taxon>Bacillati</taxon>
        <taxon>Bacillota</taxon>
        <taxon>Bacilli</taxon>
        <taxon>Lactobacillales</taxon>
        <taxon>Streptococcaceae</taxon>
        <taxon>Streptococcus</taxon>
    </lineage>
</organism>
<name>RS9_STRMU</name>
<gene>
    <name evidence="1" type="primary">rpsI</name>
    <name type="ordered locus">SMU_170</name>
</gene>
<protein>
    <recommendedName>
        <fullName evidence="1">Small ribosomal subunit protein uS9</fullName>
    </recommendedName>
    <alternativeName>
        <fullName evidence="2">30S ribosomal protein S9</fullName>
    </alternativeName>
</protein>
<proteinExistence type="inferred from homology"/>
<dbReference type="EMBL" id="AE014133">
    <property type="protein sequence ID" value="AAN57946.1"/>
    <property type="molecule type" value="Genomic_DNA"/>
</dbReference>
<dbReference type="RefSeq" id="NP_720640.1">
    <property type="nucleotide sequence ID" value="NC_004350.2"/>
</dbReference>
<dbReference type="RefSeq" id="WP_002262992.1">
    <property type="nucleotide sequence ID" value="NC_004350.2"/>
</dbReference>
<dbReference type="SMR" id="Q8DW97"/>
<dbReference type="STRING" id="210007.SMU_170"/>
<dbReference type="GeneID" id="93860538"/>
<dbReference type="KEGG" id="smu:SMU_170"/>
<dbReference type="PATRIC" id="fig|210007.7.peg.147"/>
<dbReference type="eggNOG" id="COG0103">
    <property type="taxonomic scope" value="Bacteria"/>
</dbReference>
<dbReference type="HOGENOM" id="CLU_046483_2_1_9"/>
<dbReference type="OrthoDB" id="9803965at2"/>
<dbReference type="PhylomeDB" id="Q8DW97"/>
<dbReference type="Proteomes" id="UP000002512">
    <property type="component" value="Chromosome"/>
</dbReference>
<dbReference type="GO" id="GO:0022627">
    <property type="term" value="C:cytosolic small ribosomal subunit"/>
    <property type="evidence" value="ECO:0007669"/>
    <property type="project" value="TreeGrafter"/>
</dbReference>
<dbReference type="GO" id="GO:0003723">
    <property type="term" value="F:RNA binding"/>
    <property type="evidence" value="ECO:0007669"/>
    <property type="project" value="TreeGrafter"/>
</dbReference>
<dbReference type="GO" id="GO:0003735">
    <property type="term" value="F:structural constituent of ribosome"/>
    <property type="evidence" value="ECO:0007669"/>
    <property type="project" value="InterPro"/>
</dbReference>
<dbReference type="GO" id="GO:0006412">
    <property type="term" value="P:translation"/>
    <property type="evidence" value="ECO:0007669"/>
    <property type="project" value="UniProtKB-UniRule"/>
</dbReference>
<dbReference type="FunFam" id="3.30.230.10:FF:000001">
    <property type="entry name" value="30S ribosomal protein S9"/>
    <property type="match status" value="1"/>
</dbReference>
<dbReference type="Gene3D" id="3.30.230.10">
    <property type="match status" value="1"/>
</dbReference>
<dbReference type="HAMAP" id="MF_00532_B">
    <property type="entry name" value="Ribosomal_uS9_B"/>
    <property type="match status" value="1"/>
</dbReference>
<dbReference type="InterPro" id="IPR020568">
    <property type="entry name" value="Ribosomal_Su5_D2-typ_SF"/>
</dbReference>
<dbReference type="InterPro" id="IPR000754">
    <property type="entry name" value="Ribosomal_uS9"/>
</dbReference>
<dbReference type="InterPro" id="IPR023035">
    <property type="entry name" value="Ribosomal_uS9_bac/plastid"/>
</dbReference>
<dbReference type="InterPro" id="IPR020574">
    <property type="entry name" value="Ribosomal_uS9_CS"/>
</dbReference>
<dbReference type="InterPro" id="IPR014721">
    <property type="entry name" value="Ribsml_uS5_D2-typ_fold_subgr"/>
</dbReference>
<dbReference type="NCBIfam" id="NF001099">
    <property type="entry name" value="PRK00132.1"/>
    <property type="match status" value="1"/>
</dbReference>
<dbReference type="PANTHER" id="PTHR21569">
    <property type="entry name" value="RIBOSOMAL PROTEIN S9"/>
    <property type="match status" value="1"/>
</dbReference>
<dbReference type="PANTHER" id="PTHR21569:SF1">
    <property type="entry name" value="SMALL RIBOSOMAL SUBUNIT PROTEIN US9M"/>
    <property type="match status" value="1"/>
</dbReference>
<dbReference type="Pfam" id="PF00380">
    <property type="entry name" value="Ribosomal_S9"/>
    <property type="match status" value="1"/>
</dbReference>
<dbReference type="SUPFAM" id="SSF54211">
    <property type="entry name" value="Ribosomal protein S5 domain 2-like"/>
    <property type="match status" value="1"/>
</dbReference>
<dbReference type="PROSITE" id="PS00360">
    <property type="entry name" value="RIBOSOMAL_S9"/>
    <property type="match status" value="1"/>
</dbReference>
<feature type="chain" id="PRO_0000111419" description="Small ribosomal subunit protein uS9">
    <location>
        <begin position="1"/>
        <end position="130"/>
    </location>
</feature>
<reference key="1">
    <citation type="journal article" date="2002" name="Proc. Natl. Acad. Sci. U.S.A.">
        <title>Genome sequence of Streptococcus mutans UA159, a cariogenic dental pathogen.</title>
        <authorList>
            <person name="Ajdic D.J."/>
            <person name="McShan W.M."/>
            <person name="McLaughlin R.E."/>
            <person name="Savic G."/>
            <person name="Chang J."/>
            <person name="Carson M.B."/>
            <person name="Primeaux C."/>
            <person name="Tian R."/>
            <person name="Kenton S."/>
            <person name="Jia H.G."/>
            <person name="Lin S.P."/>
            <person name="Qian Y."/>
            <person name="Li S."/>
            <person name="Zhu H."/>
            <person name="Najar F.Z."/>
            <person name="Lai H."/>
            <person name="White J."/>
            <person name="Roe B.A."/>
            <person name="Ferretti J.J."/>
        </authorList>
    </citation>
    <scope>NUCLEOTIDE SEQUENCE [LARGE SCALE GENOMIC DNA]</scope>
    <source>
        <strain>ATCC 700610 / UA159</strain>
    </source>
</reference>
<comment type="similarity">
    <text evidence="1">Belongs to the universal ribosomal protein uS9 family.</text>
</comment>
<accession>Q8DW97</accession>